<evidence type="ECO:0000255" key="1">
    <source>
        <dbReference type="HAMAP-Rule" id="MF_01584"/>
    </source>
</evidence>
<protein>
    <recommendedName>
        <fullName evidence="1">UPF0502 protein YceH</fullName>
    </recommendedName>
</protein>
<feature type="chain" id="PRO_1000201250" description="UPF0502 protein YceH">
    <location>
        <begin position="1"/>
        <end position="215"/>
    </location>
</feature>
<accession>B5F939</accession>
<organism>
    <name type="scientific">Salmonella agona (strain SL483)</name>
    <dbReference type="NCBI Taxonomy" id="454166"/>
    <lineage>
        <taxon>Bacteria</taxon>
        <taxon>Pseudomonadati</taxon>
        <taxon>Pseudomonadota</taxon>
        <taxon>Gammaproteobacteria</taxon>
        <taxon>Enterobacterales</taxon>
        <taxon>Enterobacteriaceae</taxon>
        <taxon>Salmonella</taxon>
    </lineage>
</organism>
<gene>
    <name evidence="1" type="primary">yceH</name>
    <name type="ordered locus">SeAg_B2020</name>
</gene>
<proteinExistence type="inferred from homology"/>
<comment type="similarity">
    <text evidence="1">Belongs to the UPF0502 family.</text>
</comment>
<reference key="1">
    <citation type="journal article" date="2011" name="J. Bacteriol.">
        <title>Comparative genomics of 28 Salmonella enterica isolates: evidence for CRISPR-mediated adaptive sublineage evolution.</title>
        <authorList>
            <person name="Fricke W.F."/>
            <person name="Mammel M.K."/>
            <person name="McDermott P.F."/>
            <person name="Tartera C."/>
            <person name="White D.G."/>
            <person name="Leclerc J.E."/>
            <person name="Ravel J."/>
            <person name="Cebula T.A."/>
        </authorList>
    </citation>
    <scope>NUCLEOTIDE SEQUENCE [LARGE SCALE GENOMIC DNA]</scope>
    <source>
        <strain>SL483</strain>
    </source>
</reference>
<dbReference type="EMBL" id="CP001138">
    <property type="protein sequence ID" value="ACH51991.1"/>
    <property type="molecule type" value="Genomic_DNA"/>
</dbReference>
<dbReference type="RefSeq" id="WP_000873047.1">
    <property type="nucleotide sequence ID" value="NC_011149.1"/>
</dbReference>
<dbReference type="SMR" id="B5F939"/>
<dbReference type="KEGG" id="sea:SeAg_B2020"/>
<dbReference type="HOGENOM" id="CLU_057831_2_0_6"/>
<dbReference type="Proteomes" id="UP000008819">
    <property type="component" value="Chromosome"/>
</dbReference>
<dbReference type="FunFam" id="1.10.10.10:FF:000196">
    <property type="entry name" value="UPF0502 protein YceH"/>
    <property type="match status" value="1"/>
</dbReference>
<dbReference type="Gene3D" id="1.10.10.10">
    <property type="entry name" value="Winged helix-like DNA-binding domain superfamily/Winged helix DNA-binding domain"/>
    <property type="match status" value="2"/>
</dbReference>
<dbReference type="HAMAP" id="MF_01584">
    <property type="entry name" value="UPF0502"/>
    <property type="match status" value="1"/>
</dbReference>
<dbReference type="InterPro" id="IPR007432">
    <property type="entry name" value="DUF480"/>
</dbReference>
<dbReference type="InterPro" id="IPR036388">
    <property type="entry name" value="WH-like_DNA-bd_sf"/>
</dbReference>
<dbReference type="InterPro" id="IPR036390">
    <property type="entry name" value="WH_DNA-bd_sf"/>
</dbReference>
<dbReference type="NCBIfam" id="NF008413">
    <property type="entry name" value="PRK11239.1"/>
    <property type="match status" value="1"/>
</dbReference>
<dbReference type="PANTHER" id="PTHR38768">
    <property type="entry name" value="UPF0502 PROTEIN YCEH"/>
    <property type="match status" value="1"/>
</dbReference>
<dbReference type="PANTHER" id="PTHR38768:SF1">
    <property type="entry name" value="UPF0502 PROTEIN YCEH"/>
    <property type="match status" value="1"/>
</dbReference>
<dbReference type="Pfam" id="PF04337">
    <property type="entry name" value="DUF480"/>
    <property type="match status" value="1"/>
</dbReference>
<dbReference type="SUPFAM" id="SSF46785">
    <property type="entry name" value="Winged helix' DNA-binding domain"/>
    <property type="match status" value="2"/>
</dbReference>
<name>YCEH_SALA4</name>
<sequence length="215" mass="24120">MKYELTATEARVIGCLLEKQVTTPEQYPLSVNGVVTACNQKTNREPVMNLTEQEVQEQLDNLVKRHFLRTVSGFGNRVTKYEQRFCNSEFGDLKLSAAEVALVTTLLLRGAQTPGELRSRASRMHEFSDMAEVESTLERLASREDGPYVVRLAREPGKRESRYMHLFCGDVDELSLQTSAPESASGDLQSRVEALESEVAELKQRLDSLLAHLGE</sequence>